<proteinExistence type="inferred from homology"/>
<evidence type="ECO:0000250" key="1"/>
<evidence type="ECO:0000255" key="2"/>
<evidence type="ECO:0000305" key="3"/>
<accession>D2Y2L5</accession>
<organism>
    <name type="scientific">Cyriopagopus hainanus</name>
    <name type="common">Chinese bird spider</name>
    <name type="synonym">Haplopelma hainanum</name>
    <dbReference type="NCBI Taxonomy" id="209901"/>
    <lineage>
        <taxon>Eukaryota</taxon>
        <taxon>Metazoa</taxon>
        <taxon>Ecdysozoa</taxon>
        <taxon>Arthropoda</taxon>
        <taxon>Chelicerata</taxon>
        <taxon>Arachnida</taxon>
        <taxon>Araneae</taxon>
        <taxon>Mygalomorphae</taxon>
        <taxon>Theraphosidae</taxon>
        <taxon>Haplopelma</taxon>
    </lineage>
</organism>
<reference key="1">
    <citation type="journal article" date="2010" name="J. Proteome Res.">
        <title>Molecular diversification of peptide toxins from the tarantula Haplopelma hainanum (Ornithoctonus hainana) venom based on transcriptomic, peptidomic, and genomic analyses.</title>
        <authorList>
            <person name="Tang X."/>
            <person name="Zhang Y."/>
            <person name="Hu W."/>
            <person name="Xu D."/>
            <person name="Tao H."/>
            <person name="Yang X."/>
            <person name="Li Y."/>
            <person name="Jiang L."/>
            <person name="Liang S."/>
        </authorList>
    </citation>
    <scope>NUCLEOTIDE SEQUENCE [LARGE SCALE GENOMIC DNA]</scope>
    <source>
        <tissue>Venom gland</tissue>
    </source>
</reference>
<name>H9E01_CYRHA</name>
<comment type="function">
    <text evidence="1">Ion channel inhibitor.</text>
</comment>
<comment type="subcellular location">
    <subcellularLocation>
        <location evidence="1">Secreted</location>
    </subcellularLocation>
</comment>
<comment type="tissue specificity">
    <text>Expressed by the venom gland.</text>
</comment>
<comment type="domain">
    <text evidence="1">The presence of a 'disulfide through disulfide knot' structurally defines this protein as a knottin.</text>
</comment>
<comment type="similarity">
    <text evidence="3">Belongs to the neurotoxin 10 (Hwtx-1) family. 17 (Hntx-9) subfamily.</text>
</comment>
<feature type="signal peptide" evidence="2">
    <location>
        <begin position="1"/>
        <end position="21"/>
    </location>
</feature>
<feature type="propeptide" id="PRO_0000400667" evidence="1">
    <location>
        <begin position="22"/>
        <end position="50"/>
    </location>
</feature>
<feature type="peptide" id="PRO_0000400668" description="Omega-theraphotoxin-Hhn1d">
    <location>
        <begin position="51"/>
        <end position="86"/>
    </location>
</feature>
<feature type="disulfide bond" evidence="1">
    <location>
        <begin position="52"/>
        <end position="66"/>
    </location>
</feature>
<feature type="disulfide bond" evidence="1">
    <location>
        <begin position="59"/>
        <end position="71"/>
    </location>
</feature>
<feature type="disulfide bond" evidence="1">
    <location>
        <begin position="65"/>
        <end position="78"/>
    </location>
</feature>
<sequence length="86" mass="9745">MKSIVFVALFGLALLAVVCSASEDAHKELLKEVVRAMVVDKTDAVQAEERECRWYLGECSQDGDCCKHLQCHSNYEWCIWDGTFSK</sequence>
<keyword id="KW-1015">Disulfide bond</keyword>
<keyword id="KW-0872">Ion channel impairing toxin</keyword>
<keyword id="KW-0960">Knottin</keyword>
<keyword id="KW-0964">Secreted</keyword>
<keyword id="KW-0732">Signal</keyword>
<keyword id="KW-0800">Toxin</keyword>
<protein>
    <recommendedName>
        <fullName>Omega-theraphotoxin-Hhn1d</fullName>
        <shortName>Omega-TRTX-Hhn1d</shortName>
    </recommendedName>
    <alternativeName>
        <fullName>Hainantoxin-IX-5</fullName>
        <shortName>HNTX-IX-5</shortName>
    </alternativeName>
</protein>
<dbReference type="EMBL" id="GU293092">
    <property type="protein sequence ID" value="ADB56908.1"/>
    <property type="molecule type" value="Genomic_DNA"/>
</dbReference>
<dbReference type="SMR" id="D2Y2L5"/>
<dbReference type="ArachnoServer" id="AS001997">
    <property type="toxin name" value="omega-theraphotoxin-Hhn1d"/>
</dbReference>
<dbReference type="GO" id="GO:0005576">
    <property type="term" value="C:extracellular region"/>
    <property type="evidence" value="ECO:0007669"/>
    <property type="project" value="UniProtKB-SubCell"/>
</dbReference>
<dbReference type="GO" id="GO:0008200">
    <property type="term" value="F:ion channel inhibitor activity"/>
    <property type="evidence" value="ECO:0007669"/>
    <property type="project" value="InterPro"/>
</dbReference>
<dbReference type="GO" id="GO:0090729">
    <property type="term" value="F:toxin activity"/>
    <property type="evidence" value="ECO:0007669"/>
    <property type="project" value="UniProtKB-KW"/>
</dbReference>
<dbReference type="InterPro" id="IPR011696">
    <property type="entry name" value="Huwentoxin-1"/>
</dbReference>
<dbReference type="InterPro" id="IPR013140">
    <property type="entry name" value="Huwentoxin_CS1"/>
</dbReference>
<dbReference type="Pfam" id="PF07740">
    <property type="entry name" value="Toxin_12"/>
    <property type="match status" value="1"/>
</dbReference>
<dbReference type="SUPFAM" id="SSF57059">
    <property type="entry name" value="omega toxin-like"/>
    <property type="match status" value="1"/>
</dbReference>
<dbReference type="PROSITE" id="PS60021">
    <property type="entry name" value="HWTX_1"/>
    <property type="match status" value="1"/>
</dbReference>